<dbReference type="EMBL" id="AB061312">
    <property type="protein sequence ID" value="BAB61790.1"/>
    <property type="molecule type" value="mRNA"/>
</dbReference>
<dbReference type="EMBL" id="AF313388">
    <property type="protein sequence ID" value="AAG37274.1"/>
    <property type="molecule type" value="mRNA"/>
</dbReference>
<dbReference type="EMBL" id="AF450299">
    <property type="protein sequence ID" value="AAL48250.1"/>
    <property type="molecule type" value="Transcribed_RNA"/>
</dbReference>
<dbReference type="EMBL" id="AF500082">
    <property type="protein sequence ID" value="AAM46870.1"/>
    <property type="molecule type" value="Genomic_DNA"/>
</dbReference>
<dbReference type="EMBL" id="AY390528">
    <property type="protein sequence ID" value="AAQ91202.1"/>
    <property type="molecule type" value="Genomic_DNA"/>
</dbReference>
<dbReference type="EMBL" id="CM000131">
    <property type="status" value="NOT_ANNOTATED_CDS"/>
    <property type="molecule type" value="Genomic_DNA"/>
</dbReference>
<dbReference type="PDB" id="8Y6M">
    <property type="method" value="EM"/>
    <property type="resolution" value="2.91 A"/>
    <property type="chains" value="A/B=1-124, A/B=186-530"/>
</dbReference>
<dbReference type="PDBsum" id="8Y6M"/>
<dbReference type="EMDB" id="EMD-38991"/>
<dbReference type="SMR" id="A2YGP9"/>
<dbReference type="STRING" id="39946.A2YGP9"/>
<dbReference type="Proteomes" id="UP000007015">
    <property type="component" value="Chromosome 6"/>
</dbReference>
<dbReference type="GO" id="GO:0005886">
    <property type="term" value="C:plasma membrane"/>
    <property type="evidence" value="ECO:0007669"/>
    <property type="project" value="TreeGrafter"/>
</dbReference>
<dbReference type="GO" id="GO:0008324">
    <property type="term" value="F:monoatomic cation transmembrane transporter activity"/>
    <property type="evidence" value="ECO:0007669"/>
    <property type="project" value="InterPro"/>
</dbReference>
<dbReference type="GO" id="GO:0098662">
    <property type="term" value="P:inorganic cation transmembrane transport"/>
    <property type="evidence" value="ECO:0007669"/>
    <property type="project" value="UniProtKB-ARBA"/>
</dbReference>
<dbReference type="GO" id="GO:0006813">
    <property type="term" value="P:potassium ion transport"/>
    <property type="evidence" value="ECO:0007669"/>
    <property type="project" value="UniProtKB-KW"/>
</dbReference>
<dbReference type="GO" id="GO:0006814">
    <property type="term" value="P:sodium ion transport"/>
    <property type="evidence" value="ECO:0007669"/>
    <property type="project" value="UniProtKB-KW"/>
</dbReference>
<dbReference type="InterPro" id="IPR003445">
    <property type="entry name" value="Cat_transpt"/>
</dbReference>
<dbReference type="InterPro" id="IPR051143">
    <property type="entry name" value="TrkH_K-transport"/>
</dbReference>
<dbReference type="PANTHER" id="PTHR31064:SF25">
    <property type="entry name" value="CATION TRANSPORTER HKT2_1"/>
    <property type="match status" value="1"/>
</dbReference>
<dbReference type="PANTHER" id="PTHR31064">
    <property type="entry name" value="POTASSIUM TRANSPORT PROTEIN DDB_G0292412-RELATED"/>
    <property type="match status" value="1"/>
</dbReference>
<dbReference type="Pfam" id="PF02386">
    <property type="entry name" value="TrkH"/>
    <property type="match status" value="1"/>
</dbReference>
<gene>
    <name evidence="9" type="primary">HKT2;1</name>
    <name evidence="8" type="synonym">HKT1</name>
    <name type="ORF">OsI_023492</name>
</gene>
<reference key="1">
    <citation type="journal article" date="2001" name="Plant J.">
        <title>Two types of HKT transporters with different properties of Na+ and K+ transport in Oryza sativa.</title>
        <authorList>
            <person name="Horie T."/>
            <person name="Yoshida K."/>
            <person name="Nakayama H."/>
            <person name="Yamada K."/>
            <person name="Oiki S."/>
            <person name="Shinmyo A."/>
        </authorList>
    </citation>
    <scope>NUCLEOTIDE SEQUENCE [MRNA]</scope>
    <scope>FUNCTION</scope>
    <scope>INDUCTION</scope>
    <source>
        <strain>cv. Pokkali</strain>
        <tissue>Seedling root</tissue>
    </source>
</reference>
<reference key="2">
    <citation type="journal article" date="2002" name="Plant J.">
        <title>Characterization of a HKT-type transporter in rice as a general alkali cation transporter.</title>
        <authorList>
            <person name="Golldack D."/>
            <person name="Su H."/>
            <person name="Quigley F."/>
            <person name="Kamasani U.R."/>
            <person name="Munoz-Garay C."/>
            <person name="Balderas E."/>
            <person name="Popova O.V."/>
            <person name="Bennett J."/>
            <person name="Bohnert H.J."/>
            <person name="Pantoja O."/>
        </authorList>
    </citation>
    <scope>NUCLEOTIDE SEQUENCE [MRNA]</scope>
    <scope>FUNCTION</scope>
    <scope>TISSUE SPECIFICITY</scope>
    <scope>INDUCTION</scope>
    <source>
        <strain>cv. IR29</strain>
        <strain>cv. IR36</strain>
    </source>
</reference>
<reference key="3">
    <citation type="submission" date="2002-04" db="EMBL/GenBank/DDBJ databases">
        <title>Isolation of the gene encoding high-affinity sodium/potassium symporter hkt1 of rice (Oryza sativa L.).</title>
        <authorList>
            <person name="Ghareyazie B."/>
            <person name="Bennett J."/>
        </authorList>
    </citation>
    <scope>NUCLEOTIDE SEQUENCE [GENOMIC DNA]</scope>
    <source>
        <strain>cv. IR36</strain>
        <strain>cv. Pokkali</strain>
    </source>
</reference>
<reference key="4">
    <citation type="journal article" date="2005" name="PLoS Biol.">
        <title>The genomes of Oryza sativa: a history of duplications.</title>
        <authorList>
            <person name="Yu J."/>
            <person name="Wang J."/>
            <person name="Lin W."/>
            <person name="Li S."/>
            <person name="Li H."/>
            <person name="Zhou J."/>
            <person name="Ni P."/>
            <person name="Dong W."/>
            <person name="Hu S."/>
            <person name="Zeng C."/>
            <person name="Zhang J."/>
            <person name="Zhang Y."/>
            <person name="Li R."/>
            <person name="Xu Z."/>
            <person name="Li S."/>
            <person name="Li X."/>
            <person name="Zheng H."/>
            <person name="Cong L."/>
            <person name="Lin L."/>
            <person name="Yin J."/>
            <person name="Geng J."/>
            <person name="Li G."/>
            <person name="Shi J."/>
            <person name="Liu J."/>
            <person name="Lv H."/>
            <person name="Li J."/>
            <person name="Wang J."/>
            <person name="Deng Y."/>
            <person name="Ran L."/>
            <person name="Shi X."/>
            <person name="Wang X."/>
            <person name="Wu Q."/>
            <person name="Li C."/>
            <person name="Ren X."/>
            <person name="Wang J."/>
            <person name="Wang X."/>
            <person name="Li D."/>
            <person name="Liu D."/>
            <person name="Zhang X."/>
            <person name="Ji Z."/>
            <person name="Zhao W."/>
            <person name="Sun Y."/>
            <person name="Zhang Z."/>
            <person name="Bao J."/>
            <person name="Han Y."/>
            <person name="Dong L."/>
            <person name="Ji J."/>
            <person name="Chen P."/>
            <person name="Wu S."/>
            <person name="Liu J."/>
            <person name="Xiao Y."/>
            <person name="Bu D."/>
            <person name="Tan J."/>
            <person name="Yang L."/>
            <person name="Ye C."/>
            <person name="Zhang J."/>
            <person name="Xu J."/>
            <person name="Zhou Y."/>
            <person name="Yu Y."/>
            <person name="Zhang B."/>
            <person name="Zhuang S."/>
            <person name="Wei H."/>
            <person name="Liu B."/>
            <person name="Lei M."/>
            <person name="Yu H."/>
            <person name="Li Y."/>
            <person name="Xu H."/>
            <person name="Wei S."/>
            <person name="He X."/>
            <person name="Fang L."/>
            <person name="Zhang Z."/>
            <person name="Zhang Y."/>
            <person name="Huang X."/>
            <person name="Su Z."/>
            <person name="Tong W."/>
            <person name="Li J."/>
            <person name="Tong Z."/>
            <person name="Li S."/>
            <person name="Ye J."/>
            <person name="Wang L."/>
            <person name="Fang L."/>
            <person name="Lei T."/>
            <person name="Chen C.-S."/>
            <person name="Chen H.-C."/>
            <person name="Xu Z."/>
            <person name="Li H."/>
            <person name="Huang H."/>
            <person name="Zhang F."/>
            <person name="Xu H."/>
            <person name="Li N."/>
            <person name="Zhao C."/>
            <person name="Li S."/>
            <person name="Dong L."/>
            <person name="Huang Y."/>
            <person name="Li L."/>
            <person name="Xi Y."/>
            <person name="Qi Q."/>
            <person name="Li W."/>
            <person name="Zhang B."/>
            <person name="Hu W."/>
            <person name="Zhang Y."/>
            <person name="Tian X."/>
            <person name="Jiao Y."/>
            <person name="Liang X."/>
            <person name="Jin J."/>
            <person name="Gao L."/>
            <person name="Zheng W."/>
            <person name="Hao B."/>
            <person name="Liu S.-M."/>
            <person name="Wang W."/>
            <person name="Yuan L."/>
            <person name="Cao M."/>
            <person name="McDermott J."/>
            <person name="Samudrala R."/>
            <person name="Wang J."/>
            <person name="Wong G.K.-S."/>
            <person name="Yang H."/>
        </authorList>
    </citation>
    <scope>NUCLEOTIDE SEQUENCE [LARGE SCALE GENOMIC DNA]</scope>
    <source>
        <strain>cv. 93-11</strain>
    </source>
</reference>
<reference key="5">
    <citation type="journal article" date="2002" name="Proc. Natl. Acad. Sci. U.S.A.">
        <title>Glycine residues in potassium channel-like selectivity filters determine potassium selectivity in four-loop-per-subunit HKT transporters from plants.</title>
        <authorList>
            <person name="Maeser P."/>
            <person name="Hosoo Y."/>
            <person name="Goshima S."/>
            <person name="Horie T."/>
            <person name="Eckelman B."/>
            <person name="Yamada K."/>
            <person name="Yoshida K."/>
            <person name="Bakker E.P."/>
            <person name="Shinmyo A."/>
            <person name="Oiki S."/>
            <person name="Schroeder J.I."/>
            <person name="Uozumi N."/>
        </authorList>
    </citation>
    <scope>FUNCTION</scope>
    <scope>DOMAIN</scope>
    <scope>MUTAGENESIS OF SER-88</scope>
</reference>
<reference key="6">
    <citation type="journal article" date="2003" name="Plant J.">
        <title>Sodium transport and HKT transporters: the rice model.</title>
        <authorList>
            <person name="Garciadeblas B."/>
            <person name="Senn M.E."/>
            <person name="Banuelos M.A."/>
            <person name="Rodriguez-Navarro A."/>
        </authorList>
    </citation>
    <scope>FUNCTION</scope>
    <scope>BIOPHYSICOCHEMICAL PROPERTIES</scope>
    <scope>NOMENCLATURE</scope>
</reference>
<reference key="7">
    <citation type="journal article" date="2006" name="Trends Plant Sci.">
        <title>Nomenclature for HKT transporters, key determinants of plant salinity tolerance.</title>
        <authorList>
            <person name="Platten J.D."/>
            <person name="Cotsaftis O."/>
            <person name="Berthomieu P."/>
            <person name="Bohnert H."/>
            <person name="Davenport R.J."/>
            <person name="Fairbairn D.J."/>
            <person name="Horie T."/>
            <person name="Leigh R.A."/>
            <person name="Lin H.X."/>
            <person name="Luan S."/>
            <person name="Maeser P."/>
            <person name="Pantoja O."/>
            <person name="Rodriguez-Navarro A."/>
            <person name="Schachtman D.P."/>
            <person name="Schroeder J.I."/>
            <person name="Sentenac H."/>
            <person name="Uozumi N."/>
            <person name="Very A.A."/>
            <person name="Zhu J.K."/>
            <person name="Dennis E.S."/>
            <person name="Tester M."/>
        </authorList>
    </citation>
    <scope>GENE FAMILY</scope>
    <scope>NOMENCLATURE</scope>
</reference>
<comment type="function">
    <text evidence="1 3 4 5 6">Seems to be involved in regulation of potassium-sodium homeostasis (PubMed:11489190, PubMed:11959905, PubMed:12182709, PubMed:12795699). Seems to act as a high-affinity sodium transporter, which mediates increased sodium uptake in roots under potassium deficiency and contributes to sodium accumulation and salt toxicity (PubMed:11489190, PubMed:11959905, PubMed:12182709, PubMed:12795699). Involved in nutritional sodium uptake and distribution in potassium-starved roots to allow plant growth (By similarity). May also act as a potassium transporter (PubMed:11489190, PubMed:11959905, PubMed:12182709, PubMed:12795699). Functions as a sodium-potassium cotransporter (By similarity).</text>
</comment>
<comment type="catalytic activity">
    <reaction evidence="3 4 5 6">
        <text>Na(+)(in) = Na(+)(out)</text>
        <dbReference type="Rhea" id="RHEA:34963"/>
        <dbReference type="ChEBI" id="CHEBI:29101"/>
    </reaction>
</comment>
<comment type="biophysicochemical properties">
    <kinetics>
        <KM evidence="6">20 uM for Na(+)</KM>
        <Vmax evidence="6">15.0 nmol/min/mg enzyme with sodium as ion</Vmax>
        <text>Measured in yeast strain disrupted for potassium transporters TRK1 and TRK2.</text>
    </kinetics>
</comment>
<comment type="subcellular location">
    <subcellularLocation>
        <location evidence="2">Membrane</location>
        <topology evidence="2">Multi-pass membrane protein</topology>
    </subcellularLocation>
</comment>
<comment type="tissue specificity">
    <text evidence="5">Expressed in epidermis and vascular tissue of endodermis in roots, and in cells surrounding the vasculature in leaves.</text>
</comment>
<comment type="induction">
    <text evidence="3 5">Induced by potassium starvation in roots. Down-regulated by sodium, potassium, rubidium, lithium and cesium.</text>
</comment>
<comment type="domain">
    <text evidence="4">HKT transporters are proposed to contain 4 pore-forming regions enclosed by transmembrane segments with each containing a potassium channel-like selectivity filter motif.</text>
</comment>
<comment type="similarity">
    <text evidence="10">Belongs to the TrkH potassium transport family. HKT (TC 2.A.38.3) subfamily.</text>
</comment>
<proteinExistence type="evidence at protein level"/>
<evidence type="ECO:0000250" key="1">
    <source>
        <dbReference type="UniProtKB" id="Q0D9S3"/>
    </source>
</evidence>
<evidence type="ECO:0000255" key="2"/>
<evidence type="ECO:0000269" key="3">
    <source>
    </source>
</evidence>
<evidence type="ECO:0000269" key="4">
    <source>
    </source>
</evidence>
<evidence type="ECO:0000269" key="5">
    <source>
    </source>
</evidence>
<evidence type="ECO:0000269" key="6">
    <source>
    </source>
</evidence>
<evidence type="ECO:0000303" key="7">
    <source>
    </source>
</evidence>
<evidence type="ECO:0000303" key="8">
    <source>
    </source>
</evidence>
<evidence type="ECO:0000303" key="9">
    <source>
    </source>
</evidence>
<evidence type="ECO:0000305" key="10"/>
<sequence length="530" mass="59295">MTSIYHDFIHNKLQSFGRIGRYFVNFVVLAHRFIALHIHPFWIQLSYFLLISILGSVLLMFLKPSNPEFRPGYIDMLFLSTSALTLSSLITIEMEVLSSSQIVVITLLMLLGGEVFVSFLGLMLRLNHKHNPEFSGDKVSSVPIELDTINSASTVISCEELQLEAAIPEVPSSTIKDLKRSKRLRWFLGFVVFSYFVVIHVAGFLLVLWYISRVSSAKAPLKKKGINIALFSFSVTVSSFANVGLVPTNENMAIFSKNPGLLLLFIGQILAGNTLYPLFLRLLIWFLGKVTKLRELKLMIKNPEELQYDYLLPKLPTAFLASTVIGLMASLVTLFGAVDWNSSVFDGLSSYQKIINALFMAVNARHSGENSIDCSLIAPAVLVLFIILMYLPPSTTFALSNGDEKTANKKAKRKLGLVVQNLAFSQLACISVFVIVAFITERSRLRNDPLNFSALNMIFEIISAYGNVGLSTGYSCSRLQKLHPGSICQDKPYSLSGWWSDEGKLLLVFVMLYGRLKAFTKGTGEYWRLW</sequence>
<organism>
    <name type="scientific">Oryza sativa subsp. indica</name>
    <name type="common">Rice</name>
    <dbReference type="NCBI Taxonomy" id="39946"/>
    <lineage>
        <taxon>Eukaryota</taxon>
        <taxon>Viridiplantae</taxon>
        <taxon>Streptophyta</taxon>
        <taxon>Embryophyta</taxon>
        <taxon>Tracheophyta</taxon>
        <taxon>Spermatophyta</taxon>
        <taxon>Magnoliopsida</taxon>
        <taxon>Liliopsida</taxon>
        <taxon>Poales</taxon>
        <taxon>Poaceae</taxon>
        <taxon>BOP clade</taxon>
        <taxon>Oryzoideae</taxon>
        <taxon>Oryzeae</taxon>
        <taxon>Oryzinae</taxon>
        <taxon>Oryza</taxon>
        <taxon>Oryza sativa</taxon>
    </lineage>
</organism>
<name>HKT21_ORYSI</name>
<feature type="chain" id="PRO_0000303670" description="Cation transporter HKT2;1">
    <location>
        <begin position="1"/>
        <end position="530"/>
    </location>
</feature>
<feature type="topological domain" description="Cytoplasmic" evidence="2">
    <location>
        <begin position="1"/>
        <end position="40"/>
    </location>
</feature>
<feature type="transmembrane region" description="Helical; Name=1" evidence="2">
    <location>
        <begin position="41"/>
        <end position="61"/>
    </location>
</feature>
<feature type="transmembrane region" description="Helical; Name=2" evidence="2">
    <location>
        <begin position="102"/>
        <end position="122"/>
    </location>
</feature>
<feature type="topological domain" description="Cytoplasmic" evidence="2">
    <location>
        <begin position="123"/>
        <end position="186"/>
    </location>
</feature>
<feature type="transmembrane region" description="Helical; Name=3" evidence="2">
    <location>
        <begin position="187"/>
        <end position="207"/>
    </location>
</feature>
<feature type="transmembrane region" description="Helical; Name=4" evidence="2">
    <location>
        <begin position="260"/>
        <end position="280"/>
    </location>
</feature>
<feature type="topological domain" description="Cytoplasmic" evidence="2">
    <location>
        <begin position="281"/>
        <end position="317"/>
    </location>
</feature>
<feature type="transmembrane region" description="Helical; Name=5" evidence="2">
    <location>
        <begin position="318"/>
        <end position="338"/>
    </location>
</feature>
<feature type="transmembrane region" description="Helical; Name=6" evidence="2">
    <location>
        <begin position="372"/>
        <end position="392"/>
    </location>
</feature>
<feature type="topological domain" description="Cytoplasmic" evidence="2">
    <location>
        <begin position="393"/>
        <end position="418"/>
    </location>
</feature>
<feature type="transmembrane region" description="Helical; Name=7" evidence="2">
    <location>
        <begin position="419"/>
        <end position="439"/>
    </location>
</feature>
<feature type="transmembrane region" description="Helical; Name=8" evidence="2">
    <location>
        <begin position="494"/>
        <end position="514"/>
    </location>
</feature>
<feature type="topological domain" description="Cytoplasmic" evidence="2">
    <location>
        <begin position="515"/>
        <end position="530"/>
    </location>
</feature>
<feature type="mutagenesis site" description="Conveys selectivity for potassium uptake." evidence="4">
    <original>S</original>
    <variation>G</variation>
    <location>
        <position position="88"/>
    </location>
</feature>
<feature type="sequence conflict" description="In Ref. 3; AAQ91202." evidence="10" ref="3">
    <original>R</original>
    <variation>K</variation>
    <location>
        <position position="21"/>
    </location>
</feature>
<feature type="sequence conflict" description="In Ref. 3; AAQ91202." evidence="10" ref="3">
    <original>R</original>
    <variation>K</variation>
    <location>
        <position position="32"/>
    </location>
</feature>
<feature type="sequence conflict" description="In Ref. 4; CM000131." evidence="10" ref="4">
    <original>D</original>
    <variation>E</variation>
    <location>
        <position position="403"/>
    </location>
</feature>
<feature type="sequence conflict" description="In Ref. 2; AAL48250." evidence="10" ref="2">
    <original>V</original>
    <variation>A</variation>
    <location>
        <position position="432"/>
    </location>
</feature>
<feature type="sequence conflict" description="In Ref. 4; CM000131." evidence="10" ref="4">
    <original>S</original>
    <variation>T</variation>
    <location>
        <position position="471"/>
    </location>
</feature>
<feature type="sequence conflict" description="In Ref. 4; CM000131." evidence="10" ref="4">
    <original>F</original>
    <variation>S</variation>
    <location>
        <position position="509"/>
    </location>
</feature>
<protein>
    <recommendedName>
        <fullName evidence="9">Cation transporter HKT2;1</fullName>
        <shortName evidence="9">OsHKT2;1</shortName>
    </recommendedName>
    <alternativeName>
        <fullName evidence="8">Cation transporter HKT1</fullName>
        <shortName evidence="8">OsHKT1</shortName>
    </alternativeName>
    <alternativeName>
        <fullName evidence="7">Po-OsHKT1</fullName>
    </alternativeName>
</protein>
<accession>A2YGP9</accession>
<accession>Q6TPH3</accession>
<accession>Q7GC01</accession>
<accession>Q8L6H6</accession>
<accession>Q8W1B8</accession>
<accession>Q9FPN6</accession>
<keyword id="KW-0002">3D-structure</keyword>
<keyword id="KW-0406">Ion transport</keyword>
<keyword id="KW-0472">Membrane</keyword>
<keyword id="KW-0630">Potassium</keyword>
<keyword id="KW-0633">Potassium transport</keyword>
<keyword id="KW-1185">Reference proteome</keyword>
<keyword id="KW-0915">Sodium</keyword>
<keyword id="KW-0739">Sodium transport</keyword>
<keyword id="KW-0812">Transmembrane</keyword>
<keyword id="KW-1133">Transmembrane helix</keyword>
<keyword id="KW-0813">Transport</keyword>